<reference key="1">
    <citation type="submission" date="2007-04" db="EMBL/GenBank/DDBJ databases">
        <title>Complete sequence of Shewanella putrefaciens CN-32.</title>
        <authorList>
            <consortium name="US DOE Joint Genome Institute"/>
            <person name="Copeland A."/>
            <person name="Lucas S."/>
            <person name="Lapidus A."/>
            <person name="Barry K."/>
            <person name="Detter J.C."/>
            <person name="Glavina del Rio T."/>
            <person name="Hammon N."/>
            <person name="Israni S."/>
            <person name="Dalin E."/>
            <person name="Tice H."/>
            <person name="Pitluck S."/>
            <person name="Chain P."/>
            <person name="Malfatti S."/>
            <person name="Shin M."/>
            <person name="Vergez L."/>
            <person name="Schmutz J."/>
            <person name="Larimer F."/>
            <person name="Land M."/>
            <person name="Hauser L."/>
            <person name="Kyrpides N."/>
            <person name="Mikhailova N."/>
            <person name="Romine M.F."/>
            <person name="Fredrickson J."/>
            <person name="Tiedje J."/>
            <person name="Richardson P."/>
        </authorList>
    </citation>
    <scope>NUCLEOTIDE SEQUENCE [LARGE SCALE GENOMIC DNA]</scope>
    <source>
        <strain>CN-32 / ATCC BAA-453</strain>
    </source>
</reference>
<comment type="function">
    <text evidence="1">Converts heme B (protoheme IX) to heme O by substitution of the vinyl group on carbon 2 of heme B porphyrin ring with a hydroxyethyl farnesyl side group.</text>
</comment>
<comment type="catalytic activity">
    <reaction evidence="1">
        <text>heme b + (2E,6E)-farnesyl diphosphate + H2O = Fe(II)-heme o + diphosphate</text>
        <dbReference type="Rhea" id="RHEA:28070"/>
        <dbReference type="ChEBI" id="CHEBI:15377"/>
        <dbReference type="ChEBI" id="CHEBI:33019"/>
        <dbReference type="ChEBI" id="CHEBI:60344"/>
        <dbReference type="ChEBI" id="CHEBI:60530"/>
        <dbReference type="ChEBI" id="CHEBI:175763"/>
        <dbReference type="EC" id="2.5.1.141"/>
    </reaction>
</comment>
<comment type="pathway">
    <text evidence="1">Porphyrin-containing compound metabolism; heme O biosynthesis; heme O from protoheme: step 1/1.</text>
</comment>
<comment type="subcellular location">
    <subcellularLocation>
        <location evidence="1">Cell inner membrane</location>
        <topology evidence="1">Multi-pass membrane protein</topology>
    </subcellularLocation>
</comment>
<comment type="miscellaneous">
    <text evidence="1">Carbon 2 of the heme B porphyrin ring is defined according to the Fischer nomenclature.</text>
</comment>
<comment type="similarity">
    <text evidence="1">Belongs to the UbiA prenyltransferase family. Protoheme IX farnesyltransferase subfamily.</text>
</comment>
<feature type="chain" id="PRO_0000326950" description="Protoheme IX farnesyltransferase 1">
    <location>
        <begin position="1"/>
        <end position="301"/>
    </location>
</feature>
<feature type="transmembrane region" description="Helical" evidence="1">
    <location>
        <begin position="29"/>
        <end position="49"/>
    </location>
</feature>
<feature type="transmembrane region" description="Helical" evidence="1">
    <location>
        <begin position="51"/>
        <end position="71"/>
    </location>
</feature>
<feature type="transmembrane region" description="Helical" evidence="1">
    <location>
        <begin position="101"/>
        <end position="121"/>
    </location>
</feature>
<feature type="transmembrane region" description="Helical" evidence="1">
    <location>
        <begin position="123"/>
        <end position="143"/>
    </location>
</feature>
<feature type="transmembrane region" description="Helical" evidence="1">
    <location>
        <begin position="150"/>
        <end position="170"/>
    </location>
</feature>
<feature type="transmembrane region" description="Helical" evidence="1">
    <location>
        <begin position="177"/>
        <end position="197"/>
    </location>
</feature>
<feature type="transmembrane region" description="Helical" evidence="1">
    <location>
        <begin position="223"/>
        <end position="243"/>
    </location>
</feature>
<feature type="transmembrane region" description="Helical" evidence="1">
    <location>
        <begin position="244"/>
        <end position="264"/>
    </location>
</feature>
<feature type="transmembrane region" description="Helical" evidence="1">
    <location>
        <begin position="281"/>
        <end position="301"/>
    </location>
</feature>
<organism>
    <name type="scientific">Shewanella putrefaciens (strain CN-32 / ATCC BAA-453)</name>
    <dbReference type="NCBI Taxonomy" id="319224"/>
    <lineage>
        <taxon>Bacteria</taxon>
        <taxon>Pseudomonadati</taxon>
        <taxon>Pseudomonadota</taxon>
        <taxon>Gammaproteobacteria</taxon>
        <taxon>Alteromonadales</taxon>
        <taxon>Shewanellaceae</taxon>
        <taxon>Shewanella</taxon>
    </lineage>
</organism>
<proteinExistence type="inferred from homology"/>
<evidence type="ECO:0000255" key="1">
    <source>
        <dbReference type="HAMAP-Rule" id="MF_00154"/>
    </source>
</evidence>
<dbReference type="EC" id="2.5.1.141" evidence="1"/>
<dbReference type="EMBL" id="CP000681">
    <property type="protein sequence ID" value="ABP77496.1"/>
    <property type="molecule type" value="Genomic_DNA"/>
</dbReference>
<dbReference type="SMR" id="A4YC13"/>
<dbReference type="STRING" id="319224.Sputcn32_3789"/>
<dbReference type="KEGG" id="spc:Sputcn32_3789"/>
<dbReference type="eggNOG" id="COG0109">
    <property type="taxonomic scope" value="Bacteria"/>
</dbReference>
<dbReference type="HOGENOM" id="CLU_029631_0_2_6"/>
<dbReference type="UniPathway" id="UPA00834">
    <property type="reaction ID" value="UER00712"/>
</dbReference>
<dbReference type="GO" id="GO:0005886">
    <property type="term" value="C:plasma membrane"/>
    <property type="evidence" value="ECO:0007669"/>
    <property type="project" value="UniProtKB-SubCell"/>
</dbReference>
<dbReference type="GO" id="GO:0008495">
    <property type="term" value="F:protoheme IX farnesyltransferase activity"/>
    <property type="evidence" value="ECO:0007669"/>
    <property type="project" value="UniProtKB-UniRule"/>
</dbReference>
<dbReference type="GO" id="GO:0048034">
    <property type="term" value="P:heme O biosynthetic process"/>
    <property type="evidence" value="ECO:0007669"/>
    <property type="project" value="UniProtKB-UniRule"/>
</dbReference>
<dbReference type="CDD" id="cd13957">
    <property type="entry name" value="PT_UbiA_Cox10"/>
    <property type="match status" value="1"/>
</dbReference>
<dbReference type="FunFam" id="1.10.357.140:FF:000001">
    <property type="entry name" value="Protoheme IX farnesyltransferase"/>
    <property type="match status" value="1"/>
</dbReference>
<dbReference type="Gene3D" id="1.10.357.140">
    <property type="entry name" value="UbiA prenyltransferase"/>
    <property type="match status" value="1"/>
</dbReference>
<dbReference type="HAMAP" id="MF_00154">
    <property type="entry name" value="CyoE_CtaB"/>
    <property type="match status" value="1"/>
</dbReference>
<dbReference type="InterPro" id="IPR006369">
    <property type="entry name" value="Protohaem_IX_farnesylTrfase"/>
</dbReference>
<dbReference type="InterPro" id="IPR000537">
    <property type="entry name" value="UbiA_prenyltransferase"/>
</dbReference>
<dbReference type="InterPro" id="IPR030470">
    <property type="entry name" value="UbiA_prenylTrfase_CS"/>
</dbReference>
<dbReference type="InterPro" id="IPR044878">
    <property type="entry name" value="UbiA_sf"/>
</dbReference>
<dbReference type="NCBIfam" id="TIGR01473">
    <property type="entry name" value="cyoE_ctaB"/>
    <property type="match status" value="1"/>
</dbReference>
<dbReference type="NCBIfam" id="NF003349">
    <property type="entry name" value="PRK04375.1-2"/>
    <property type="match status" value="1"/>
</dbReference>
<dbReference type="PANTHER" id="PTHR43448:SF7">
    <property type="entry name" value="4-HYDROXYBENZOATE SOLANESYLTRANSFERASE"/>
    <property type="match status" value="1"/>
</dbReference>
<dbReference type="PANTHER" id="PTHR43448">
    <property type="entry name" value="PROTOHEME IX FARNESYLTRANSFERASE, MITOCHONDRIAL"/>
    <property type="match status" value="1"/>
</dbReference>
<dbReference type="Pfam" id="PF01040">
    <property type="entry name" value="UbiA"/>
    <property type="match status" value="1"/>
</dbReference>
<dbReference type="PROSITE" id="PS00943">
    <property type="entry name" value="UBIA"/>
    <property type="match status" value="1"/>
</dbReference>
<gene>
    <name evidence="1" type="primary">cyoE1</name>
    <name type="ordered locus">Sputcn32_3789</name>
</gene>
<name>CYOE1_SHEPC</name>
<protein>
    <recommendedName>
        <fullName evidence="1">Protoheme IX farnesyltransferase 1</fullName>
        <ecNumber evidence="1">2.5.1.141</ecNumber>
    </recommendedName>
    <alternativeName>
        <fullName evidence="1">Heme B farnesyltransferase 1</fullName>
    </alternativeName>
    <alternativeName>
        <fullName evidence="1">Heme O synthase 1</fullName>
    </alternativeName>
</protein>
<keyword id="KW-0997">Cell inner membrane</keyword>
<keyword id="KW-1003">Cell membrane</keyword>
<keyword id="KW-0350">Heme biosynthesis</keyword>
<keyword id="KW-0472">Membrane</keyword>
<keyword id="KW-0808">Transferase</keyword>
<keyword id="KW-0812">Transmembrane</keyword>
<keyword id="KW-1133">Transmembrane helix</keyword>
<accession>A4YC13</accession>
<sequence length="301" mass="33305">MAKPLTITSSHSHFSLAWRAYFEMTKPKVVALMLLTVLVGMCLAVPTAVPVQPLIAGMFGIALMAGSAAALNHLIDRRIDGMMARTYNRPLPKGRVSAKRALIFAASIGGLGFVVLYVLVNPLTAWLTFASLIGYALVYTAYLKRATSQNIVIGGLAGAMPPLLGWTAVTNQFHGHALLLVIIIFTWTPPHFWALAIHRRAEYAKVDIPMLPVTHGVEFTKTCILLYTVLLAIACLLPVLVGMCGPMYFVCSSLLSSVFIYKAWQLKYRDRDGLAMQVFRFSIYHLMLLFMALLIDHYLWS</sequence>